<name>Y4354_BACCZ</name>
<organism>
    <name type="scientific">Bacillus cereus (strain ZK / E33L)</name>
    <dbReference type="NCBI Taxonomy" id="288681"/>
    <lineage>
        <taxon>Bacteria</taxon>
        <taxon>Bacillati</taxon>
        <taxon>Bacillota</taxon>
        <taxon>Bacilli</taxon>
        <taxon>Bacillales</taxon>
        <taxon>Bacillaceae</taxon>
        <taxon>Bacillus</taxon>
        <taxon>Bacillus cereus group</taxon>
    </lineage>
</organism>
<feature type="chain" id="PRO_0000156369" description="UPF0173 metal-dependent hydrolase BCE33L4354">
    <location>
        <begin position="1"/>
        <end position="227"/>
    </location>
</feature>
<protein>
    <recommendedName>
        <fullName evidence="1">UPF0173 metal-dependent hydrolase BCE33L4354</fullName>
    </recommendedName>
</protein>
<dbReference type="EMBL" id="CP000001">
    <property type="protein sequence ID" value="AAU15915.1"/>
    <property type="molecule type" value="Genomic_DNA"/>
</dbReference>
<dbReference type="RefSeq" id="WP_000868945.1">
    <property type="nucleotide sequence ID" value="NZ_CP009968.1"/>
</dbReference>
<dbReference type="SMR" id="Q633I4"/>
<dbReference type="KEGG" id="bcz:BCE33L4354"/>
<dbReference type="PATRIC" id="fig|288681.22.peg.1017"/>
<dbReference type="Proteomes" id="UP000002612">
    <property type="component" value="Chromosome"/>
</dbReference>
<dbReference type="GO" id="GO:0016787">
    <property type="term" value="F:hydrolase activity"/>
    <property type="evidence" value="ECO:0007669"/>
    <property type="project" value="UniProtKB-UniRule"/>
</dbReference>
<dbReference type="Gene3D" id="3.60.15.10">
    <property type="entry name" value="Ribonuclease Z/Hydroxyacylglutathione hydrolase-like"/>
    <property type="match status" value="1"/>
</dbReference>
<dbReference type="HAMAP" id="MF_00457">
    <property type="entry name" value="UPF0173"/>
    <property type="match status" value="1"/>
</dbReference>
<dbReference type="InterPro" id="IPR001279">
    <property type="entry name" value="Metallo-B-lactamas"/>
</dbReference>
<dbReference type="InterPro" id="IPR036866">
    <property type="entry name" value="RibonucZ/Hydroxyglut_hydro"/>
</dbReference>
<dbReference type="InterPro" id="IPR022877">
    <property type="entry name" value="UPF0173"/>
</dbReference>
<dbReference type="InterPro" id="IPR050114">
    <property type="entry name" value="UPF0173_UPF0282_UlaG_hydrolase"/>
</dbReference>
<dbReference type="NCBIfam" id="NF001911">
    <property type="entry name" value="PRK00685.1"/>
    <property type="match status" value="1"/>
</dbReference>
<dbReference type="PANTHER" id="PTHR43546:SF3">
    <property type="entry name" value="UPF0173 METAL-DEPENDENT HYDROLASE MJ1163"/>
    <property type="match status" value="1"/>
</dbReference>
<dbReference type="PANTHER" id="PTHR43546">
    <property type="entry name" value="UPF0173 METAL-DEPENDENT HYDROLASE MJ1163-RELATED"/>
    <property type="match status" value="1"/>
</dbReference>
<dbReference type="Pfam" id="PF12706">
    <property type="entry name" value="Lactamase_B_2"/>
    <property type="match status" value="1"/>
</dbReference>
<dbReference type="SMART" id="SM00849">
    <property type="entry name" value="Lactamase_B"/>
    <property type="match status" value="1"/>
</dbReference>
<dbReference type="SUPFAM" id="SSF56281">
    <property type="entry name" value="Metallo-hydrolase/oxidoreductase"/>
    <property type="match status" value="1"/>
</dbReference>
<evidence type="ECO:0000255" key="1">
    <source>
        <dbReference type="HAMAP-Rule" id="MF_00457"/>
    </source>
</evidence>
<reference key="1">
    <citation type="journal article" date="2006" name="J. Bacteriol.">
        <title>Pathogenomic sequence analysis of Bacillus cereus and Bacillus thuringiensis isolates closely related to Bacillus anthracis.</title>
        <authorList>
            <person name="Han C.S."/>
            <person name="Xie G."/>
            <person name="Challacombe J.F."/>
            <person name="Altherr M.R."/>
            <person name="Bhotika S.S."/>
            <person name="Bruce D."/>
            <person name="Campbell C.S."/>
            <person name="Campbell M.L."/>
            <person name="Chen J."/>
            <person name="Chertkov O."/>
            <person name="Cleland C."/>
            <person name="Dimitrijevic M."/>
            <person name="Doggett N.A."/>
            <person name="Fawcett J.J."/>
            <person name="Glavina T."/>
            <person name="Goodwin L.A."/>
            <person name="Hill K.K."/>
            <person name="Hitchcock P."/>
            <person name="Jackson P.J."/>
            <person name="Keim P."/>
            <person name="Kewalramani A.R."/>
            <person name="Longmire J."/>
            <person name="Lucas S."/>
            <person name="Malfatti S."/>
            <person name="McMurry K."/>
            <person name="Meincke L.J."/>
            <person name="Misra M."/>
            <person name="Moseman B.L."/>
            <person name="Mundt M."/>
            <person name="Munk A.C."/>
            <person name="Okinaka R.T."/>
            <person name="Parson-Quintana B."/>
            <person name="Reilly L.P."/>
            <person name="Richardson P."/>
            <person name="Robinson D.L."/>
            <person name="Rubin E."/>
            <person name="Saunders E."/>
            <person name="Tapia R."/>
            <person name="Tesmer J.G."/>
            <person name="Thayer N."/>
            <person name="Thompson L.S."/>
            <person name="Tice H."/>
            <person name="Ticknor L.O."/>
            <person name="Wills P.L."/>
            <person name="Brettin T.S."/>
            <person name="Gilna P."/>
        </authorList>
    </citation>
    <scope>NUCLEOTIDE SEQUENCE [LARGE SCALE GENOMIC DNA]</scope>
    <source>
        <strain>ZK / E33L</strain>
    </source>
</reference>
<keyword id="KW-0378">Hydrolase</keyword>
<proteinExistence type="inferred from homology"/>
<comment type="similarity">
    <text evidence="1">Belongs to the UPF0173 family.</text>
</comment>
<accession>Q633I4</accession>
<sequence>MKVSYHGHSVVKIETNGKVILIDPFLTGNPKTDLKAEDVNVDAILLSHGHGDHVGDTVELAKKNNAVVVAPFELATFLSWQGVNTHPMHIGGSHEFDFGKVKFTQAFHGSSYIDEENKTITYTGMPAGILFTAEEKTLYHAGDTALFSDMKLIGELNNIDVAFLPIGDNFTMGPEDAVLAAKWVQAKTVVPMHYNTFPVIEQDPYQFVEKLQNCTGKVLEAGESITL</sequence>
<gene>
    <name type="ordered locus">BCE33L4354</name>
</gene>